<name>YMFJ_BACSU</name>
<protein>
    <recommendedName>
        <fullName>Uncharacterized protein YmfJ</fullName>
    </recommendedName>
</protein>
<feature type="chain" id="PRO_0000372591" description="Uncharacterized protein YmfJ">
    <location>
        <begin position="1"/>
        <end position="85"/>
    </location>
</feature>
<sequence length="85" mass="9648">MSVLENWDSWKNFLGDRLNYAQDKGMSQDTITDLATEIGSYLANEVESKNEQEKVLADLWSVASKDEQHAIANMMVKLVENNSTH</sequence>
<reference key="1">
    <citation type="journal article" date="1997" name="Nature">
        <title>The complete genome sequence of the Gram-positive bacterium Bacillus subtilis.</title>
        <authorList>
            <person name="Kunst F."/>
            <person name="Ogasawara N."/>
            <person name="Moszer I."/>
            <person name="Albertini A.M."/>
            <person name="Alloni G."/>
            <person name="Azevedo V."/>
            <person name="Bertero M.G."/>
            <person name="Bessieres P."/>
            <person name="Bolotin A."/>
            <person name="Borchert S."/>
            <person name="Borriss R."/>
            <person name="Boursier L."/>
            <person name="Brans A."/>
            <person name="Braun M."/>
            <person name="Brignell S.C."/>
            <person name="Bron S."/>
            <person name="Brouillet S."/>
            <person name="Bruschi C.V."/>
            <person name="Caldwell B."/>
            <person name="Capuano V."/>
            <person name="Carter N.M."/>
            <person name="Choi S.-K."/>
            <person name="Codani J.-J."/>
            <person name="Connerton I.F."/>
            <person name="Cummings N.J."/>
            <person name="Daniel R.A."/>
            <person name="Denizot F."/>
            <person name="Devine K.M."/>
            <person name="Duesterhoeft A."/>
            <person name="Ehrlich S.D."/>
            <person name="Emmerson P.T."/>
            <person name="Entian K.-D."/>
            <person name="Errington J."/>
            <person name="Fabret C."/>
            <person name="Ferrari E."/>
            <person name="Foulger D."/>
            <person name="Fritz C."/>
            <person name="Fujita M."/>
            <person name="Fujita Y."/>
            <person name="Fuma S."/>
            <person name="Galizzi A."/>
            <person name="Galleron N."/>
            <person name="Ghim S.-Y."/>
            <person name="Glaser P."/>
            <person name="Goffeau A."/>
            <person name="Golightly E.J."/>
            <person name="Grandi G."/>
            <person name="Guiseppi G."/>
            <person name="Guy B.J."/>
            <person name="Haga K."/>
            <person name="Haiech J."/>
            <person name="Harwood C.R."/>
            <person name="Henaut A."/>
            <person name="Hilbert H."/>
            <person name="Holsappel S."/>
            <person name="Hosono S."/>
            <person name="Hullo M.-F."/>
            <person name="Itaya M."/>
            <person name="Jones L.-M."/>
            <person name="Joris B."/>
            <person name="Karamata D."/>
            <person name="Kasahara Y."/>
            <person name="Klaerr-Blanchard M."/>
            <person name="Klein C."/>
            <person name="Kobayashi Y."/>
            <person name="Koetter P."/>
            <person name="Koningstein G."/>
            <person name="Krogh S."/>
            <person name="Kumano M."/>
            <person name="Kurita K."/>
            <person name="Lapidus A."/>
            <person name="Lardinois S."/>
            <person name="Lauber J."/>
            <person name="Lazarevic V."/>
            <person name="Lee S.-M."/>
            <person name="Levine A."/>
            <person name="Liu H."/>
            <person name="Masuda S."/>
            <person name="Mauel C."/>
            <person name="Medigue C."/>
            <person name="Medina N."/>
            <person name="Mellado R.P."/>
            <person name="Mizuno M."/>
            <person name="Moestl D."/>
            <person name="Nakai S."/>
            <person name="Noback M."/>
            <person name="Noone D."/>
            <person name="O'Reilly M."/>
            <person name="Ogawa K."/>
            <person name="Ogiwara A."/>
            <person name="Oudega B."/>
            <person name="Park S.-H."/>
            <person name="Parro V."/>
            <person name="Pohl T.M."/>
            <person name="Portetelle D."/>
            <person name="Porwollik S."/>
            <person name="Prescott A.M."/>
            <person name="Presecan E."/>
            <person name="Pujic P."/>
            <person name="Purnelle B."/>
            <person name="Rapoport G."/>
            <person name="Rey M."/>
            <person name="Reynolds S."/>
            <person name="Rieger M."/>
            <person name="Rivolta C."/>
            <person name="Rocha E."/>
            <person name="Roche B."/>
            <person name="Rose M."/>
            <person name="Sadaie Y."/>
            <person name="Sato T."/>
            <person name="Scanlan E."/>
            <person name="Schleich S."/>
            <person name="Schroeter R."/>
            <person name="Scoffone F."/>
            <person name="Sekiguchi J."/>
            <person name="Sekowska A."/>
            <person name="Seror S.J."/>
            <person name="Serror P."/>
            <person name="Shin B.-S."/>
            <person name="Soldo B."/>
            <person name="Sorokin A."/>
            <person name="Tacconi E."/>
            <person name="Takagi T."/>
            <person name="Takahashi H."/>
            <person name="Takemaru K."/>
            <person name="Takeuchi M."/>
            <person name="Tamakoshi A."/>
            <person name="Tanaka T."/>
            <person name="Terpstra P."/>
            <person name="Tognoni A."/>
            <person name="Tosato V."/>
            <person name="Uchiyama S."/>
            <person name="Vandenbol M."/>
            <person name="Vannier F."/>
            <person name="Vassarotti A."/>
            <person name="Viari A."/>
            <person name="Wambutt R."/>
            <person name="Wedler E."/>
            <person name="Wedler H."/>
            <person name="Weitzenegger T."/>
            <person name="Winters P."/>
            <person name="Wipat A."/>
            <person name="Yamamoto H."/>
            <person name="Yamane K."/>
            <person name="Yasumoto K."/>
            <person name="Yata K."/>
            <person name="Yoshida K."/>
            <person name="Yoshikawa H.-F."/>
            <person name="Zumstein E."/>
            <person name="Yoshikawa H."/>
            <person name="Danchin A."/>
        </authorList>
    </citation>
    <scope>NUCLEOTIDE SEQUENCE [LARGE SCALE GENOMIC DNA]</scope>
    <source>
        <strain>168</strain>
    </source>
</reference>
<keyword id="KW-1185">Reference proteome</keyword>
<proteinExistence type="predicted"/>
<dbReference type="EMBL" id="AL009126">
    <property type="protein sequence ID" value="CAB13561.1"/>
    <property type="molecule type" value="Genomic_DNA"/>
</dbReference>
<dbReference type="PIR" id="A69886">
    <property type="entry name" value="A69886"/>
</dbReference>
<dbReference type="RefSeq" id="NP_389570.1">
    <property type="nucleotide sequence ID" value="NC_000964.3"/>
</dbReference>
<dbReference type="RefSeq" id="WP_003245199.1">
    <property type="nucleotide sequence ID" value="NZ_OZ025638.1"/>
</dbReference>
<dbReference type="SMR" id="O31768"/>
<dbReference type="FunCoup" id="O31768">
    <property type="interactions" value="68"/>
</dbReference>
<dbReference type="STRING" id="224308.BSU16880"/>
<dbReference type="PaxDb" id="224308-BSU16880"/>
<dbReference type="EnsemblBacteria" id="CAB13561">
    <property type="protein sequence ID" value="CAB13561"/>
    <property type="gene ID" value="BSU_16880"/>
</dbReference>
<dbReference type="GeneID" id="939670"/>
<dbReference type="KEGG" id="bsu:BSU16880"/>
<dbReference type="PATRIC" id="fig|224308.179.peg.1829"/>
<dbReference type="eggNOG" id="ENOG50330BT">
    <property type="taxonomic scope" value="Bacteria"/>
</dbReference>
<dbReference type="InParanoid" id="O31768"/>
<dbReference type="OrthoDB" id="2382009at2"/>
<dbReference type="PhylomeDB" id="O31768"/>
<dbReference type="BioCyc" id="BSUB:BSU16880-MONOMER"/>
<dbReference type="Proteomes" id="UP000001570">
    <property type="component" value="Chromosome"/>
</dbReference>
<dbReference type="Gene3D" id="1.10.760.20">
    <property type="entry name" value="Protein of unknown function DUF3243"/>
    <property type="match status" value="1"/>
</dbReference>
<dbReference type="InterPro" id="IPR021637">
    <property type="entry name" value="DUF3243"/>
</dbReference>
<dbReference type="InterPro" id="IPR024702">
    <property type="entry name" value="Uncharacterised_YmfJ"/>
</dbReference>
<dbReference type="InterPro" id="IPR038292">
    <property type="entry name" value="YmfJ/YflH_sf"/>
</dbReference>
<dbReference type="Pfam" id="PF11588">
    <property type="entry name" value="DUF3243"/>
    <property type="match status" value="1"/>
</dbReference>
<dbReference type="PIRSF" id="PIRSF004764">
    <property type="entry name" value="YmfJ"/>
    <property type="match status" value="1"/>
</dbReference>
<organism>
    <name type="scientific">Bacillus subtilis (strain 168)</name>
    <dbReference type="NCBI Taxonomy" id="224308"/>
    <lineage>
        <taxon>Bacteria</taxon>
        <taxon>Bacillati</taxon>
        <taxon>Bacillota</taxon>
        <taxon>Bacilli</taxon>
        <taxon>Bacillales</taxon>
        <taxon>Bacillaceae</taxon>
        <taxon>Bacillus</taxon>
    </lineage>
</organism>
<gene>
    <name type="primary">ymfJ</name>
    <name type="ordered locus">BSU16880</name>
</gene>
<accession>O31768</accession>